<organism>
    <name type="scientific">Butomus umbellatus</name>
    <name type="common">Flowering rush</name>
    <dbReference type="NCBI Taxonomy" id="50236"/>
    <lineage>
        <taxon>Eukaryota</taxon>
        <taxon>Viridiplantae</taxon>
        <taxon>Streptophyta</taxon>
        <taxon>Embryophyta</taxon>
        <taxon>Tracheophyta</taxon>
        <taxon>Spermatophyta</taxon>
        <taxon>Magnoliopsida</taxon>
        <taxon>Liliopsida</taxon>
        <taxon>Butomaceae</taxon>
        <taxon>Butomus</taxon>
    </lineage>
</organism>
<keyword id="KW-0150">Chloroplast</keyword>
<keyword id="KW-0249">Electron transport</keyword>
<keyword id="KW-0349">Heme</keyword>
<keyword id="KW-0408">Iron</keyword>
<keyword id="KW-0472">Membrane</keyword>
<keyword id="KW-0479">Metal-binding</keyword>
<keyword id="KW-0602">Photosynthesis</keyword>
<keyword id="KW-0604">Photosystem II</keyword>
<keyword id="KW-0934">Plastid</keyword>
<keyword id="KW-0793">Thylakoid</keyword>
<keyword id="KW-0812">Transmembrane</keyword>
<keyword id="KW-1133">Transmembrane helix</keyword>
<keyword id="KW-0813">Transport</keyword>
<sequence>MTIDRTYPIFTVRWLAVHGLAVPTVSFLGSISAMQFIQR</sequence>
<feature type="chain" id="PRO_0000200362" description="Cytochrome b559 subunit beta">
    <location>
        <begin position="1"/>
        <end position="39"/>
    </location>
</feature>
<feature type="transmembrane region" description="Helical" evidence="1">
    <location>
        <begin position="14"/>
        <end position="30"/>
    </location>
</feature>
<feature type="binding site" description="axial binding residue" evidence="1">
    <location>
        <position position="18"/>
    </location>
    <ligand>
        <name>heme</name>
        <dbReference type="ChEBI" id="CHEBI:30413"/>
        <note>ligand shared with alpha subunit</note>
    </ligand>
    <ligandPart>
        <name>Fe</name>
        <dbReference type="ChEBI" id="CHEBI:18248"/>
    </ligandPart>
</feature>
<geneLocation type="chloroplast"/>
<gene>
    <name evidence="1" type="primary">psbF</name>
</gene>
<reference key="1">
    <citation type="submission" date="2002-09" db="EMBL/GenBank/DDBJ databases">
        <title>Phylogenetic relationships among the major lineages of Asparagales based on a large chloroplast data set.</title>
        <authorList>
            <person name="McPherson M.A."/>
            <person name="Rai H.S."/>
            <person name="Wong W.A."/>
            <person name="Graham S.W."/>
        </authorList>
    </citation>
    <scope>NUCLEOTIDE SEQUENCE [GENOMIC DNA]</scope>
</reference>
<dbReference type="EMBL" id="AY147546">
    <property type="protein sequence ID" value="AAN32285.1"/>
    <property type="molecule type" value="Genomic_DNA"/>
</dbReference>
<dbReference type="RefSeq" id="YP_009972071.1">
    <property type="nucleotide sequence ID" value="NC_051949.1"/>
</dbReference>
<dbReference type="SMR" id="Q67HR9"/>
<dbReference type="GeneID" id="60456597"/>
<dbReference type="GO" id="GO:0009535">
    <property type="term" value="C:chloroplast thylakoid membrane"/>
    <property type="evidence" value="ECO:0007669"/>
    <property type="project" value="UniProtKB-SubCell"/>
</dbReference>
<dbReference type="GO" id="GO:0009539">
    <property type="term" value="C:photosystem II reaction center"/>
    <property type="evidence" value="ECO:0007669"/>
    <property type="project" value="InterPro"/>
</dbReference>
<dbReference type="GO" id="GO:0009055">
    <property type="term" value="F:electron transfer activity"/>
    <property type="evidence" value="ECO:0007669"/>
    <property type="project" value="UniProtKB-UniRule"/>
</dbReference>
<dbReference type="GO" id="GO:0020037">
    <property type="term" value="F:heme binding"/>
    <property type="evidence" value="ECO:0007669"/>
    <property type="project" value="InterPro"/>
</dbReference>
<dbReference type="GO" id="GO:0005506">
    <property type="term" value="F:iron ion binding"/>
    <property type="evidence" value="ECO:0007669"/>
    <property type="project" value="UniProtKB-UniRule"/>
</dbReference>
<dbReference type="GO" id="GO:0009767">
    <property type="term" value="P:photosynthetic electron transport chain"/>
    <property type="evidence" value="ECO:0007669"/>
    <property type="project" value="InterPro"/>
</dbReference>
<dbReference type="HAMAP" id="MF_00643">
    <property type="entry name" value="PSII_PsbF"/>
    <property type="match status" value="1"/>
</dbReference>
<dbReference type="InterPro" id="IPR006241">
    <property type="entry name" value="PSII_cyt_b559_bsu"/>
</dbReference>
<dbReference type="InterPro" id="IPR006216">
    <property type="entry name" value="PSII_cyt_b559_CS"/>
</dbReference>
<dbReference type="InterPro" id="IPR013081">
    <property type="entry name" value="PSII_cyt_b559_N"/>
</dbReference>
<dbReference type="NCBIfam" id="TIGR01333">
    <property type="entry name" value="cyt_b559_beta"/>
    <property type="match status" value="1"/>
</dbReference>
<dbReference type="Pfam" id="PF00283">
    <property type="entry name" value="Cytochrom_B559"/>
    <property type="match status" value="1"/>
</dbReference>
<dbReference type="PIRSF" id="PIRSF000037">
    <property type="entry name" value="PsbF"/>
    <property type="match status" value="1"/>
</dbReference>
<dbReference type="SUPFAM" id="SSF161045">
    <property type="entry name" value="Cytochrome b559 subunits"/>
    <property type="match status" value="1"/>
</dbReference>
<dbReference type="PROSITE" id="PS00537">
    <property type="entry name" value="CYTOCHROME_B559"/>
    <property type="match status" value="1"/>
</dbReference>
<accession>Q67HR9</accession>
<evidence type="ECO:0000255" key="1">
    <source>
        <dbReference type="HAMAP-Rule" id="MF_00643"/>
    </source>
</evidence>
<comment type="function">
    <text evidence="1">This b-type cytochrome is tightly associated with the reaction center of photosystem II (PSII). PSII is a light-driven water:plastoquinone oxidoreductase that uses light energy to abstract electrons from H(2)O, generating O(2) and a proton gradient subsequently used for ATP formation. It consists of a core antenna complex that captures photons, and an electron transfer chain that converts photonic excitation into a charge separation.</text>
</comment>
<comment type="cofactor">
    <cofactor evidence="1">
        <name>heme b</name>
        <dbReference type="ChEBI" id="CHEBI:60344"/>
    </cofactor>
    <text evidence="1">With its partner (PsbE) binds heme. PSII binds additional chlorophylls, carotenoids and specific lipids.</text>
</comment>
<comment type="subunit">
    <text evidence="1">Heterodimer of an alpha subunit and a beta subunit. PSII is composed of 1 copy each of membrane proteins PsbA, PsbB, PsbC, PsbD, PsbE, PsbF, PsbH, PsbI, PsbJ, PsbK, PsbL, PsbM, PsbT, PsbX, PsbY, PsbZ, Psb30/Ycf12, at least 3 peripheral proteins of the oxygen-evolving complex and a large number of cofactors. It forms dimeric complexes.</text>
</comment>
<comment type="subcellular location">
    <subcellularLocation>
        <location evidence="1">Plastid</location>
        <location evidence="1">Chloroplast thylakoid membrane</location>
        <topology evidence="1">Single-pass membrane protein</topology>
    </subcellularLocation>
</comment>
<comment type="similarity">
    <text evidence="1">Belongs to the PsbE/PsbF family.</text>
</comment>
<protein>
    <recommendedName>
        <fullName evidence="1">Cytochrome b559 subunit beta</fullName>
    </recommendedName>
    <alternativeName>
        <fullName evidence="1">PSII reaction center subunit VI</fullName>
    </alternativeName>
</protein>
<name>PSBF_BUTUM</name>
<proteinExistence type="inferred from homology"/>